<reference key="1">
    <citation type="journal article" date="2001" name="Proc. Natl. Acad. Sci. U.S.A.">
        <title>Genome sequence of an industrial microorganism Streptomyces avermitilis: deducing the ability of producing secondary metabolites.</title>
        <authorList>
            <person name="Omura S."/>
            <person name="Ikeda H."/>
            <person name="Ishikawa J."/>
            <person name="Hanamoto A."/>
            <person name="Takahashi C."/>
            <person name="Shinose M."/>
            <person name="Takahashi Y."/>
            <person name="Horikawa H."/>
            <person name="Nakazawa H."/>
            <person name="Osonoe T."/>
            <person name="Kikuchi H."/>
            <person name="Shiba T."/>
            <person name="Sakaki Y."/>
            <person name="Hattori M."/>
        </authorList>
    </citation>
    <scope>NUCLEOTIDE SEQUENCE [LARGE SCALE GENOMIC DNA]</scope>
    <source>
        <strain>ATCC 31267 / DSM 46492 / JCM 5070 / NBRC 14893 / NCIMB 12804 / NRRL 8165 / MA-4680</strain>
    </source>
</reference>
<reference key="2">
    <citation type="journal article" date="2003" name="Nat. Biotechnol.">
        <title>Complete genome sequence and comparative analysis of the industrial microorganism Streptomyces avermitilis.</title>
        <authorList>
            <person name="Ikeda H."/>
            <person name="Ishikawa J."/>
            <person name="Hanamoto A."/>
            <person name="Shinose M."/>
            <person name="Kikuchi H."/>
            <person name="Shiba T."/>
            <person name="Sakaki Y."/>
            <person name="Hattori M."/>
            <person name="Omura S."/>
        </authorList>
    </citation>
    <scope>NUCLEOTIDE SEQUENCE [LARGE SCALE GENOMIC DNA]</scope>
    <source>
        <strain>ATCC 31267 / DSM 46492 / JCM 5070 / NBRC 14893 / NCIMB 12804 / NRRL 8165 / MA-4680</strain>
    </source>
</reference>
<dbReference type="EMBL" id="BA000030">
    <property type="protein sequence ID" value="BAC72032.1"/>
    <property type="molecule type" value="Genomic_DNA"/>
</dbReference>
<dbReference type="RefSeq" id="WP_010985745.1">
    <property type="nucleotide sequence ID" value="NZ_JZJK01000079.1"/>
</dbReference>
<dbReference type="SMR" id="Q82FD4"/>
<dbReference type="GeneID" id="41541400"/>
<dbReference type="KEGG" id="sma:SAVERM_4320"/>
<dbReference type="eggNOG" id="COG5512">
    <property type="taxonomic scope" value="Bacteria"/>
</dbReference>
<dbReference type="HOGENOM" id="CLU_087206_0_2_11"/>
<dbReference type="OrthoDB" id="5516926at2"/>
<dbReference type="Proteomes" id="UP000000428">
    <property type="component" value="Chromosome"/>
</dbReference>
<dbReference type="HAMAP" id="MF_00630">
    <property type="entry name" value="UPF0232"/>
    <property type="match status" value="1"/>
</dbReference>
<dbReference type="InterPro" id="IPR007922">
    <property type="entry name" value="DciA-like"/>
</dbReference>
<dbReference type="InterPro" id="IPR023007">
    <property type="entry name" value="UPF0232_actinobac"/>
</dbReference>
<dbReference type="PANTHER" id="PTHR36456">
    <property type="entry name" value="UPF0232 PROTEIN SCO3875"/>
    <property type="match status" value="1"/>
</dbReference>
<dbReference type="PANTHER" id="PTHR36456:SF1">
    <property type="entry name" value="UPF0232 PROTEIN SCO3875"/>
    <property type="match status" value="1"/>
</dbReference>
<dbReference type="Pfam" id="PF05258">
    <property type="entry name" value="DciA"/>
    <property type="match status" value="1"/>
</dbReference>
<accession>Q82FD4</accession>
<proteinExistence type="inferred from homology"/>
<name>Y4320_STRAW</name>
<gene>
    <name type="ordered locus">SAV_4320</name>
</gene>
<comment type="similarity">
    <text evidence="1">Belongs to the UPF0232 family.</text>
</comment>
<evidence type="ECO:0000255" key="1">
    <source>
        <dbReference type="HAMAP-Rule" id="MF_00630"/>
    </source>
</evidence>
<evidence type="ECO:0000256" key="2">
    <source>
        <dbReference type="SAM" id="MobiDB-lite"/>
    </source>
</evidence>
<feature type="chain" id="PRO_0000211366" description="UPF0232 protein SAV_4320">
    <location>
        <begin position="1"/>
        <end position="181"/>
    </location>
</feature>
<feature type="region of interest" description="Disordered" evidence="2">
    <location>
        <begin position="1"/>
        <end position="64"/>
    </location>
</feature>
<feature type="region of interest" description="Disordered" evidence="2">
    <location>
        <begin position="156"/>
        <end position="181"/>
    </location>
</feature>
<feature type="compositionally biased region" description="Polar residues" evidence="2">
    <location>
        <begin position="1"/>
        <end position="10"/>
    </location>
</feature>
<feature type="compositionally biased region" description="Basic and acidic residues" evidence="2">
    <location>
        <begin position="30"/>
        <end position="39"/>
    </location>
</feature>
<sequence>MSDTPAQTPEPSKKTPEPSGVDLARVALRAAKEQARARGDAAQQKRQARRGGLRSGARADGRDPMALGAAINRLLTERGWETPAAVGGVMGRWPQIVGEDLAKHCVPQRYDEDERVLTVQCDSTAWATQLRLLAPQLVARLNEDLGHGTVRLLKVQGPGGPARRYGPLRAPGSTGPGDTYG</sequence>
<keyword id="KW-1185">Reference proteome</keyword>
<protein>
    <recommendedName>
        <fullName evidence="1">UPF0232 protein SAV_4320</fullName>
    </recommendedName>
</protein>
<organism>
    <name type="scientific">Streptomyces avermitilis (strain ATCC 31267 / DSM 46492 / JCM 5070 / NBRC 14893 / NCIMB 12804 / NRRL 8165 / MA-4680)</name>
    <dbReference type="NCBI Taxonomy" id="227882"/>
    <lineage>
        <taxon>Bacteria</taxon>
        <taxon>Bacillati</taxon>
        <taxon>Actinomycetota</taxon>
        <taxon>Actinomycetes</taxon>
        <taxon>Kitasatosporales</taxon>
        <taxon>Streptomycetaceae</taxon>
        <taxon>Streptomyces</taxon>
    </lineage>
</organism>